<accession>A9BD62</accession>
<comment type="catalytic activity">
    <reaction evidence="1">
        <text>tRNA(Lys) + L-lysine + ATP = L-lysyl-tRNA(Lys) + AMP + diphosphate</text>
        <dbReference type="Rhea" id="RHEA:20792"/>
        <dbReference type="Rhea" id="RHEA-COMP:9696"/>
        <dbReference type="Rhea" id="RHEA-COMP:9697"/>
        <dbReference type="ChEBI" id="CHEBI:30616"/>
        <dbReference type="ChEBI" id="CHEBI:32551"/>
        <dbReference type="ChEBI" id="CHEBI:33019"/>
        <dbReference type="ChEBI" id="CHEBI:78442"/>
        <dbReference type="ChEBI" id="CHEBI:78529"/>
        <dbReference type="ChEBI" id="CHEBI:456215"/>
        <dbReference type="EC" id="6.1.1.6"/>
    </reaction>
</comment>
<comment type="cofactor">
    <cofactor evidence="1">
        <name>Mg(2+)</name>
        <dbReference type="ChEBI" id="CHEBI:18420"/>
    </cofactor>
    <text evidence="1">Binds 3 Mg(2+) ions per subunit.</text>
</comment>
<comment type="subunit">
    <text evidence="1">Homodimer.</text>
</comment>
<comment type="subcellular location">
    <subcellularLocation>
        <location evidence="1">Cytoplasm</location>
    </subcellularLocation>
</comment>
<comment type="similarity">
    <text evidence="1">Belongs to the class-II aminoacyl-tRNA synthetase family.</text>
</comment>
<reference key="1">
    <citation type="journal article" date="2007" name="PLoS Genet.">
        <title>Patterns and implications of gene gain and loss in the evolution of Prochlorococcus.</title>
        <authorList>
            <person name="Kettler G.C."/>
            <person name="Martiny A.C."/>
            <person name="Huang K."/>
            <person name="Zucker J."/>
            <person name="Coleman M.L."/>
            <person name="Rodrigue S."/>
            <person name="Chen F."/>
            <person name="Lapidus A."/>
            <person name="Ferriera S."/>
            <person name="Johnson J."/>
            <person name="Steglich C."/>
            <person name="Church G.M."/>
            <person name="Richardson P."/>
            <person name="Chisholm S.W."/>
        </authorList>
    </citation>
    <scope>NUCLEOTIDE SEQUENCE [LARGE SCALE GENOMIC DNA]</scope>
    <source>
        <strain>MIT 9211</strain>
    </source>
</reference>
<feature type="chain" id="PRO_1000101134" description="Lysine--tRNA ligase">
    <location>
        <begin position="1"/>
        <end position="503"/>
    </location>
</feature>
<feature type="binding site" evidence="1">
    <location>
        <position position="410"/>
    </location>
    <ligand>
        <name>Mg(2+)</name>
        <dbReference type="ChEBI" id="CHEBI:18420"/>
        <label>1</label>
    </ligand>
</feature>
<feature type="binding site" evidence="1">
    <location>
        <position position="417"/>
    </location>
    <ligand>
        <name>Mg(2+)</name>
        <dbReference type="ChEBI" id="CHEBI:18420"/>
        <label>1</label>
    </ligand>
</feature>
<feature type="binding site" evidence="1">
    <location>
        <position position="417"/>
    </location>
    <ligand>
        <name>Mg(2+)</name>
        <dbReference type="ChEBI" id="CHEBI:18420"/>
        <label>2</label>
    </ligand>
</feature>
<gene>
    <name evidence="1" type="primary">lysS</name>
    <name type="ordered locus">P9211_17441</name>
</gene>
<dbReference type="EC" id="6.1.1.6" evidence="1"/>
<dbReference type="EMBL" id="CP000878">
    <property type="protein sequence ID" value="ABX09675.1"/>
    <property type="molecule type" value="Genomic_DNA"/>
</dbReference>
<dbReference type="RefSeq" id="WP_012196295.1">
    <property type="nucleotide sequence ID" value="NC_009976.1"/>
</dbReference>
<dbReference type="SMR" id="A9BD62"/>
<dbReference type="STRING" id="93059.P9211_17441"/>
<dbReference type="KEGG" id="pmj:P9211_17441"/>
<dbReference type="eggNOG" id="COG1190">
    <property type="taxonomic scope" value="Bacteria"/>
</dbReference>
<dbReference type="HOGENOM" id="CLU_008255_6_0_3"/>
<dbReference type="OrthoDB" id="9802326at2"/>
<dbReference type="Proteomes" id="UP000000788">
    <property type="component" value="Chromosome"/>
</dbReference>
<dbReference type="GO" id="GO:0005829">
    <property type="term" value="C:cytosol"/>
    <property type="evidence" value="ECO:0007669"/>
    <property type="project" value="TreeGrafter"/>
</dbReference>
<dbReference type="GO" id="GO:0005524">
    <property type="term" value="F:ATP binding"/>
    <property type="evidence" value="ECO:0007669"/>
    <property type="project" value="UniProtKB-UniRule"/>
</dbReference>
<dbReference type="GO" id="GO:0004824">
    <property type="term" value="F:lysine-tRNA ligase activity"/>
    <property type="evidence" value="ECO:0007669"/>
    <property type="project" value="UniProtKB-UniRule"/>
</dbReference>
<dbReference type="GO" id="GO:0000287">
    <property type="term" value="F:magnesium ion binding"/>
    <property type="evidence" value="ECO:0007669"/>
    <property type="project" value="UniProtKB-UniRule"/>
</dbReference>
<dbReference type="GO" id="GO:0000049">
    <property type="term" value="F:tRNA binding"/>
    <property type="evidence" value="ECO:0007669"/>
    <property type="project" value="TreeGrafter"/>
</dbReference>
<dbReference type="GO" id="GO:0006430">
    <property type="term" value="P:lysyl-tRNA aminoacylation"/>
    <property type="evidence" value="ECO:0007669"/>
    <property type="project" value="UniProtKB-UniRule"/>
</dbReference>
<dbReference type="CDD" id="cd00775">
    <property type="entry name" value="LysRS_core"/>
    <property type="match status" value="1"/>
</dbReference>
<dbReference type="CDD" id="cd04322">
    <property type="entry name" value="LysRS_N"/>
    <property type="match status" value="1"/>
</dbReference>
<dbReference type="FunFam" id="3.30.930.10:FF:000238">
    <property type="entry name" value="Lysine--tRNA ligase"/>
    <property type="match status" value="1"/>
</dbReference>
<dbReference type="Gene3D" id="3.30.930.10">
    <property type="entry name" value="Bira Bifunctional Protein, Domain 2"/>
    <property type="match status" value="1"/>
</dbReference>
<dbReference type="Gene3D" id="2.40.50.140">
    <property type="entry name" value="Nucleic acid-binding proteins"/>
    <property type="match status" value="1"/>
</dbReference>
<dbReference type="HAMAP" id="MF_00252">
    <property type="entry name" value="Lys_tRNA_synth_class2"/>
    <property type="match status" value="1"/>
</dbReference>
<dbReference type="InterPro" id="IPR004364">
    <property type="entry name" value="Aa-tRNA-synt_II"/>
</dbReference>
<dbReference type="InterPro" id="IPR006195">
    <property type="entry name" value="aa-tRNA-synth_II"/>
</dbReference>
<dbReference type="InterPro" id="IPR045864">
    <property type="entry name" value="aa-tRNA-synth_II/BPL/LPL"/>
</dbReference>
<dbReference type="InterPro" id="IPR002313">
    <property type="entry name" value="Lys-tRNA-ligase_II"/>
</dbReference>
<dbReference type="InterPro" id="IPR044136">
    <property type="entry name" value="Lys-tRNA-ligase_II_N"/>
</dbReference>
<dbReference type="InterPro" id="IPR018149">
    <property type="entry name" value="Lys-tRNA-synth_II_C"/>
</dbReference>
<dbReference type="InterPro" id="IPR012340">
    <property type="entry name" value="NA-bd_OB-fold"/>
</dbReference>
<dbReference type="InterPro" id="IPR004365">
    <property type="entry name" value="NA-bd_OB_tRNA"/>
</dbReference>
<dbReference type="NCBIfam" id="TIGR00499">
    <property type="entry name" value="lysS_bact"/>
    <property type="match status" value="1"/>
</dbReference>
<dbReference type="NCBIfam" id="NF001756">
    <property type="entry name" value="PRK00484.1"/>
    <property type="match status" value="1"/>
</dbReference>
<dbReference type="PANTHER" id="PTHR42918:SF15">
    <property type="entry name" value="LYSINE--TRNA LIGASE, CHLOROPLASTIC_MITOCHONDRIAL"/>
    <property type="match status" value="1"/>
</dbReference>
<dbReference type="PANTHER" id="PTHR42918">
    <property type="entry name" value="LYSYL-TRNA SYNTHETASE"/>
    <property type="match status" value="1"/>
</dbReference>
<dbReference type="Pfam" id="PF00152">
    <property type="entry name" value="tRNA-synt_2"/>
    <property type="match status" value="1"/>
</dbReference>
<dbReference type="Pfam" id="PF01336">
    <property type="entry name" value="tRNA_anti-codon"/>
    <property type="match status" value="1"/>
</dbReference>
<dbReference type="PRINTS" id="PR00982">
    <property type="entry name" value="TRNASYNTHLYS"/>
</dbReference>
<dbReference type="SUPFAM" id="SSF55681">
    <property type="entry name" value="Class II aaRS and biotin synthetases"/>
    <property type="match status" value="1"/>
</dbReference>
<dbReference type="SUPFAM" id="SSF50249">
    <property type="entry name" value="Nucleic acid-binding proteins"/>
    <property type="match status" value="1"/>
</dbReference>
<dbReference type="PROSITE" id="PS50862">
    <property type="entry name" value="AA_TRNA_LIGASE_II"/>
    <property type="match status" value="1"/>
</dbReference>
<proteinExistence type="inferred from homology"/>
<organism>
    <name type="scientific">Prochlorococcus marinus (strain MIT 9211)</name>
    <dbReference type="NCBI Taxonomy" id="93059"/>
    <lineage>
        <taxon>Bacteria</taxon>
        <taxon>Bacillati</taxon>
        <taxon>Cyanobacteriota</taxon>
        <taxon>Cyanophyceae</taxon>
        <taxon>Synechococcales</taxon>
        <taxon>Prochlorococcaceae</taxon>
        <taxon>Prochlorococcus</taxon>
    </lineage>
</organism>
<name>SYK_PROM4</name>
<evidence type="ECO:0000255" key="1">
    <source>
        <dbReference type="HAMAP-Rule" id="MF_00252"/>
    </source>
</evidence>
<protein>
    <recommendedName>
        <fullName evidence="1">Lysine--tRNA ligase</fullName>
        <ecNumber evidence="1">6.1.1.6</ecNumber>
    </recommendedName>
    <alternativeName>
        <fullName evidence="1">Lysyl-tRNA synthetase</fullName>
        <shortName evidence="1">LysRS</shortName>
    </alternativeName>
</protein>
<sequence>MSDLKETRLEKAQVLKKLGNGPYGIRFEVTHKAAVLQVEHQDLANGQERQLEVCVAGRVISRRVMGKLAFFTLSDESGSIQLFLEKATLEEHSDLDQESPGSFSQLTDLVDSGDWIGVNGILRRTDRGELSIKVFSWTMLCKSLQPLPDKWHGLSDVEKRYRQRYVDLIVNPQSRKTFRSRALMVSAIRRWLDERDFLEIETPVLQSEAGGAEARPFITHHNTLDLSLYLRIATELHLKRLVVGGFERVYELGRIFRNEGISTRHNPEFTTVEIYQAFADYTDMMDLTEEMISFVCSQICGSTTIQYQGKEVDLTPPWRRITMHELVLESTGLDFYEFGQDISKASTAMQSVGLNVPDHADSVGRLMNEAFEQAVEGDLFQPTFVMDYPIEISPLARKHRSKPGIVERFELFIAGRETANAFSELIDPVDQKERLLLQQSRRQAGDLEAHVIDEDFVNALEVGMPPTGGLGIGIDRLVMLLTDSPSIRDVIAFPLLKPESGSQ</sequence>
<keyword id="KW-0030">Aminoacyl-tRNA synthetase</keyword>
<keyword id="KW-0067">ATP-binding</keyword>
<keyword id="KW-0963">Cytoplasm</keyword>
<keyword id="KW-0436">Ligase</keyword>
<keyword id="KW-0460">Magnesium</keyword>
<keyword id="KW-0479">Metal-binding</keyword>
<keyword id="KW-0547">Nucleotide-binding</keyword>
<keyword id="KW-0648">Protein biosynthesis</keyword>
<keyword id="KW-1185">Reference proteome</keyword>